<dbReference type="EMBL" id="X73237">
    <property type="protein sequence ID" value="CAA51710.1"/>
    <property type="molecule type" value="Genomic_DNA"/>
</dbReference>
<dbReference type="EMBL" id="AL513382">
    <property type="protein sequence ID" value="CAD05742.1"/>
    <property type="molecule type" value="Genomic_DNA"/>
</dbReference>
<dbReference type="EMBL" id="AE014613">
    <property type="protein sequence ID" value="AAO68562.1"/>
    <property type="molecule type" value="Genomic_DNA"/>
</dbReference>
<dbReference type="PIR" id="S34263">
    <property type="entry name" value="S34263"/>
</dbReference>
<dbReference type="RefSeq" id="NP_456554.1">
    <property type="nucleotide sequence ID" value="NC_003198.1"/>
</dbReference>
<dbReference type="RefSeq" id="WP_001080666.1">
    <property type="nucleotide sequence ID" value="NZ_WSUQ01000029.1"/>
</dbReference>
<dbReference type="SMR" id="Q56110"/>
<dbReference type="STRING" id="220341.gene:17586111"/>
<dbReference type="TCDB" id="1.B.1.1.27">
    <property type="family name" value="the general bacterial porin (gbp) family"/>
</dbReference>
<dbReference type="KEGG" id="stt:t0883"/>
<dbReference type="KEGG" id="sty:STY2203"/>
<dbReference type="PATRIC" id="fig|220341.7.peg.2220"/>
<dbReference type="eggNOG" id="COG3203">
    <property type="taxonomic scope" value="Bacteria"/>
</dbReference>
<dbReference type="HOGENOM" id="CLU_058202_0_0_6"/>
<dbReference type="OMA" id="VYMTGRT"/>
<dbReference type="OrthoDB" id="7055111at2"/>
<dbReference type="Proteomes" id="UP000000541">
    <property type="component" value="Chromosome"/>
</dbReference>
<dbReference type="Proteomes" id="UP000002670">
    <property type="component" value="Chromosome"/>
</dbReference>
<dbReference type="GO" id="GO:0009279">
    <property type="term" value="C:cell outer membrane"/>
    <property type="evidence" value="ECO:0007669"/>
    <property type="project" value="UniProtKB-SubCell"/>
</dbReference>
<dbReference type="GO" id="GO:0046930">
    <property type="term" value="C:pore complex"/>
    <property type="evidence" value="ECO:0007669"/>
    <property type="project" value="UniProtKB-KW"/>
</dbReference>
<dbReference type="GO" id="GO:0015288">
    <property type="term" value="F:porin activity"/>
    <property type="evidence" value="ECO:0007669"/>
    <property type="project" value="UniProtKB-KW"/>
</dbReference>
<dbReference type="GO" id="GO:0034220">
    <property type="term" value="P:monoatomic ion transmembrane transport"/>
    <property type="evidence" value="ECO:0007669"/>
    <property type="project" value="InterPro"/>
</dbReference>
<dbReference type="CDD" id="cd00342">
    <property type="entry name" value="gram_neg_porins"/>
    <property type="match status" value="1"/>
</dbReference>
<dbReference type="Gene3D" id="2.40.160.10">
    <property type="entry name" value="Porin"/>
    <property type="match status" value="1"/>
</dbReference>
<dbReference type="InterPro" id="IPR050298">
    <property type="entry name" value="Gram-neg_bact_OMP"/>
</dbReference>
<dbReference type="InterPro" id="IPR033900">
    <property type="entry name" value="Gram_neg_porin_domain"/>
</dbReference>
<dbReference type="InterPro" id="IPR023614">
    <property type="entry name" value="Porin_dom_sf"/>
</dbReference>
<dbReference type="InterPro" id="IPR001897">
    <property type="entry name" value="Porin_gammaproteobac"/>
</dbReference>
<dbReference type="InterPro" id="IPR001702">
    <property type="entry name" value="Porin_Gram-ve"/>
</dbReference>
<dbReference type="InterPro" id="IPR013793">
    <property type="entry name" value="Porin_Gram-ve_CS"/>
</dbReference>
<dbReference type="NCBIfam" id="NF007841">
    <property type="entry name" value="PRK10554.1"/>
    <property type="match status" value="1"/>
</dbReference>
<dbReference type="PANTHER" id="PTHR34501:SF8">
    <property type="entry name" value="OUTER MEMBRANE PORIN N-RELATED"/>
    <property type="match status" value="1"/>
</dbReference>
<dbReference type="PANTHER" id="PTHR34501">
    <property type="entry name" value="PROTEIN YDDL-RELATED"/>
    <property type="match status" value="1"/>
</dbReference>
<dbReference type="Pfam" id="PF00267">
    <property type="entry name" value="Porin_1"/>
    <property type="match status" value="1"/>
</dbReference>
<dbReference type="PRINTS" id="PR00183">
    <property type="entry name" value="ECOLIPORIN"/>
</dbReference>
<dbReference type="PRINTS" id="PR00182">
    <property type="entry name" value="ECOLNEIPORIN"/>
</dbReference>
<dbReference type="SUPFAM" id="SSF56935">
    <property type="entry name" value="Porins"/>
    <property type="match status" value="1"/>
</dbReference>
<dbReference type="PROSITE" id="PS00576">
    <property type="entry name" value="GRAM_NEG_PORIN"/>
    <property type="match status" value="1"/>
</dbReference>
<protein>
    <recommendedName>
        <fullName>Outer membrane protein S1</fullName>
    </recommendedName>
</protein>
<comment type="function">
    <text evidence="1">Forms pores that allow passive diffusion of small molecules across the outer membrane.</text>
</comment>
<comment type="subunit">
    <text evidence="1">Homotrimer.</text>
</comment>
<comment type="subcellular location">
    <subcellularLocation>
        <location evidence="1">Cell outer membrane</location>
        <topology evidence="1">Multi-pass membrane protein</topology>
    </subcellularLocation>
</comment>
<comment type="similarity">
    <text evidence="4">Belongs to the Gram-negative porin family.</text>
</comment>
<name>OMPS1_SALTI</name>
<reference key="1">
    <citation type="journal article" date="1995" name="Gene">
        <title>Isolation and characterization of ompS1, a novel Salmonella typhi outer membrane protein-encoding gene.</title>
        <authorList>
            <person name="Fernandez-Mora M."/>
            <person name="Oropeza R."/>
            <person name="Puente J.L."/>
            <person name="Calva E."/>
        </authorList>
    </citation>
    <scope>NUCLEOTIDE SEQUENCE [GENOMIC DNA]</scope>
    <source>
        <strain>IMSS-1</strain>
    </source>
</reference>
<reference key="2">
    <citation type="journal article" date="2001" name="Nature">
        <title>Complete genome sequence of a multiple drug resistant Salmonella enterica serovar Typhi CT18.</title>
        <authorList>
            <person name="Parkhill J."/>
            <person name="Dougan G."/>
            <person name="James K.D."/>
            <person name="Thomson N.R."/>
            <person name="Pickard D."/>
            <person name="Wain J."/>
            <person name="Churcher C.M."/>
            <person name="Mungall K.L."/>
            <person name="Bentley S.D."/>
            <person name="Holden M.T.G."/>
            <person name="Sebaihia M."/>
            <person name="Baker S."/>
            <person name="Basham D."/>
            <person name="Brooks K."/>
            <person name="Chillingworth T."/>
            <person name="Connerton P."/>
            <person name="Cronin A."/>
            <person name="Davis P."/>
            <person name="Davies R.M."/>
            <person name="Dowd L."/>
            <person name="White N."/>
            <person name="Farrar J."/>
            <person name="Feltwell T."/>
            <person name="Hamlin N."/>
            <person name="Haque A."/>
            <person name="Hien T.T."/>
            <person name="Holroyd S."/>
            <person name="Jagels K."/>
            <person name="Krogh A."/>
            <person name="Larsen T.S."/>
            <person name="Leather S."/>
            <person name="Moule S."/>
            <person name="O'Gaora P."/>
            <person name="Parry C."/>
            <person name="Quail M.A."/>
            <person name="Rutherford K.M."/>
            <person name="Simmonds M."/>
            <person name="Skelton J."/>
            <person name="Stevens K."/>
            <person name="Whitehead S."/>
            <person name="Barrell B.G."/>
        </authorList>
    </citation>
    <scope>NUCLEOTIDE SEQUENCE [LARGE SCALE GENOMIC DNA]</scope>
    <source>
        <strain>CT18</strain>
    </source>
</reference>
<reference key="3">
    <citation type="journal article" date="2003" name="J. Bacteriol.">
        <title>Comparative genomics of Salmonella enterica serovar Typhi strains Ty2 and CT18.</title>
        <authorList>
            <person name="Deng W."/>
            <person name="Liou S.-R."/>
            <person name="Plunkett G. III"/>
            <person name="Mayhew G.F."/>
            <person name="Rose D.J."/>
            <person name="Burland V."/>
            <person name="Kodoyianni V."/>
            <person name="Schwartz D.C."/>
            <person name="Blattner F.R."/>
        </authorList>
    </citation>
    <scope>NUCLEOTIDE SEQUENCE [LARGE SCALE GENOMIC DNA]</scope>
    <source>
        <strain>ATCC 700931 / Ty2</strain>
    </source>
</reference>
<organism>
    <name type="scientific">Salmonella typhi</name>
    <dbReference type="NCBI Taxonomy" id="90370"/>
    <lineage>
        <taxon>Bacteria</taxon>
        <taxon>Pseudomonadati</taxon>
        <taxon>Pseudomonadota</taxon>
        <taxon>Gammaproteobacteria</taxon>
        <taxon>Enterobacterales</taxon>
        <taxon>Enterobacteriaceae</taxon>
        <taxon>Salmonella</taxon>
    </lineage>
</organism>
<sequence length="394" mass="43253">MNRKVLALLVPALLVAGAANAAEIYNKNGNKLDLYGKVDGLRYFSDNAGDDGDQSYARIGFKGETQINDMLTGYGQWEYNIKVNTTEGEGANSWTRLGFAGLKFGEYGSFDYGRNYGVIYDIEAWTDALPEFGGDTYTQTDVYMLGRTNGVATYRNTDFFGLVEGLNFALQYQGNNENGGAGAGEGTGNGGNRKLARENGDGFGMSTSYDFDFGLSLGAAYSSSDRSDNQVARGYGDGMNERNNYAGGETAEAWTIGAKYDAYNVYLAAMYAETRNMTYYGGGNGEGNGSIANKTQNFEVVAQYQFDFGLRPSIAYLQSKGKDLGGQEVHRGNWRYTDKDLVKYVDVGMTYYFNKNMSTYVDYKINLLDEDDDFYANNGIATDDIVGVGLVYQF</sequence>
<accession>Q56110</accession>
<evidence type="ECO:0000250" key="1"/>
<evidence type="ECO:0000255" key="2"/>
<evidence type="ECO:0000256" key="3">
    <source>
        <dbReference type="SAM" id="MobiDB-lite"/>
    </source>
</evidence>
<evidence type="ECO:0000305" key="4"/>
<proteinExistence type="inferred from homology"/>
<keyword id="KW-0998">Cell outer membrane</keyword>
<keyword id="KW-0406">Ion transport</keyword>
<keyword id="KW-0472">Membrane</keyword>
<keyword id="KW-0626">Porin</keyword>
<keyword id="KW-0732">Signal</keyword>
<keyword id="KW-0812">Transmembrane</keyword>
<keyword id="KW-1134">Transmembrane beta strand</keyword>
<keyword id="KW-0813">Transport</keyword>
<feature type="signal peptide" evidence="2">
    <location>
        <begin position="1"/>
        <end position="21"/>
    </location>
</feature>
<feature type="chain" id="PRO_0000025254" description="Outer membrane protein S1">
    <location>
        <begin position="22"/>
        <end position="394"/>
    </location>
</feature>
<feature type="region of interest" description="Disordered" evidence="3">
    <location>
        <begin position="222"/>
        <end position="242"/>
    </location>
</feature>
<gene>
    <name type="primary">ompS1</name>
    <name type="synonym">ompS</name>
    <name type="ordered locus">STY2203</name>
    <name type="ordered locus">t0883</name>
</gene>